<feature type="chain" id="PRO_0000149489" description="Adenine phosphoribosyltransferase">
    <location>
        <begin position="1"/>
        <end position="186"/>
    </location>
</feature>
<proteinExistence type="inferred from homology"/>
<organism>
    <name type="scientific">Xanthomonas axonopodis pv. citri (strain 306)</name>
    <dbReference type="NCBI Taxonomy" id="190486"/>
    <lineage>
        <taxon>Bacteria</taxon>
        <taxon>Pseudomonadati</taxon>
        <taxon>Pseudomonadota</taxon>
        <taxon>Gammaproteobacteria</taxon>
        <taxon>Lysobacterales</taxon>
        <taxon>Lysobacteraceae</taxon>
        <taxon>Xanthomonas</taxon>
    </lineage>
</organism>
<reference key="1">
    <citation type="journal article" date="2002" name="Nature">
        <title>Comparison of the genomes of two Xanthomonas pathogens with differing host specificities.</title>
        <authorList>
            <person name="da Silva A.C.R."/>
            <person name="Ferro J.A."/>
            <person name="Reinach F.C."/>
            <person name="Farah C.S."/>
            <person name="Furlan L.R."/>
            <person name="Quaggio R.B."/>
            <person name="Monteiro-Vitorello C.B."/>
            <person name="Van Sluys M.A."/>
            <person name="Almeida N.F. Jr."/>
            <person name="Alves L.M.C."/>
            <person name="do Amaral A.M."/>
            <person name="Bertolini M.C."/>
            <person name="Camargo L.E.A."/>
            <person name="Camarotte G."/>
            <person name="Cannavan F."/>
            <person name="Cardozo J."/>
            <person name="Chambergo F."/>
            <person name="Ciapina L.P."/>
            <person name="Cicarelli R.M.B."/>
            <person name="Coutinho L.L."/>
            <person name="Cursino-Santos J.R."/>
            <person name="El-Dorry H."/>
            <person name="Faria J.B."/>
            <person name="Ferreira A.J.S."/>
            <person name="Ferreira R.C.C."/>
            <person name="Ferro M.I.T."/>
            <person name="Formighieri E.F."/>
            <person name="Franco M.C."/>
            <person name="Greggio C.C."/>
            <person name="Gruber A."/>
            <person name="Katsuyama A.M."/>
            <person name="Kishi L.T."/>
            <person name="Leite R.P."/>
            <person name="Lemos E.G.M."/>
            <person name="Lemos M.V.F."/>
            <person name="Locali E.C."/>
            <person name="Machado M.A."/>
            <person name="Madeira A.M.B.N."/>
            <person name="Martinez-Rossi N.M."/>
            <person name="Martins E.C."/>
            <person name="Meidanis J."/>
            <person name="Menck C.F.M."/>
            <person name="Miyaki C.Y."/>
            <person name="Moon D.H."/>
            <person name="Moreira L.M."/>
            <person name="Novo M.T.M."/>
            <person name="Okura V.K."/>
            <person name="Oliveira M.C."/>
            <person name="Oliveira V.R."/>
            <person name="Pereira H.A."/>
            <person name="Rossi A."/>
            <person name="Sena J.A.D."/>
            <person name="Silva C."/>
            <person name="de Souza R.F."/>
            <person name="Spinola L.A.F."/>
            <person name="Takita M.A."/>
            <person name="Tamura R.E."/>
            <person name="Teixeira E.C."/>
            <person name="Tezza R.I.D."/>
            <person name="Trindade dos Santos M."/>
            <person name="Truffi D."/>
            <person name="Tsai S.M."/>
            <person name="White F.F."/>
            <person name="Setubal J.C."/>
            <person name="Kitajima J.P."/>
        </authorList>
    </citation>
    <scope>NUCLEOTIDE SEQUENCE [LARGE SCALE GENOMIC DNA]</scope>
    <source>
        <strain>306</strain>
    </source>
</reference>
<evidence type="ECO:0000255" key="1">
    <source>
        <dbReference type="HAMAP-Rule" id="MF_00004"/>
    </source>
</evidence>
<gene>
    <name evidence="1" type="primary">apt</name>
    <name type="ordered locus">XAC2391</name>
</gene>
<protein>
    <recommendedName>
        <fullName evidence="1">Adenine phosphoribosyltransferase</fullName>
        <shortName evidence="1">APRT</shortName>
        <ecNumber evidence="1">2.4.2.7</ecNumber>
    </recommendedName>
</protein>
<comment type="function">
    <text evidence="1">Catalyzes a salvage reaction resulting in the formation of AMP, that is energically less costly than de novo synthesis.</text>
</comment>
<comment type="catalytic activity">
    <reaction evidence="1">
        <text>AMP + diphosphate = 5-phospho-alpha-D-ribose 1-diphosphate + adenine</text>
        <dbReference type="Rhea" id="RHEA:16609"/>
        <dbReference type="ChEBI" id="CHEBI:16708"/>
        <dbReference type="ChEBI" id="CHEBI:33019"/>
        <dbReference type="ChEBI" id="CHEBI:58017"/>
        <dbReference type="ChEBI" id="CHEBI:456215"/>
        <dbReference type="EC" id="2.4.2.7"/>
    </reaction>
</comment>
<comment type="pathway">
    <text evidence="1">Purine metabolism; AMP biosynthesis via salvage pathway; AMP from adenine: step 1/1.</text>
</comment>
<comment type="subunit">
    <text evidence="1">Homodimer.</text>
</comment>
<comment type="subcellular location">
    <subcellularLocation>
        <location evidence="1">Cytoplasm</location>
    </subcellularLocation>
</comment>
<comment type="similarity">
    <text evidence="1">Belongs to the purine/pyrimidine phosphoribosyltransferase family.</text>
</comment>
<keyword id="KW-0963">Cytoplasm</keyword>
<keyword id="KW-0328">Glycosyltransferase</keyword>
<keyword id="KW-0660">Purine salvage</keyword>
<keyword id="KW-0808">Transferase</keyword>
<dbReference type="EC" id="2.4.2.7" evidence="1"/>
<dbReference type="EMBL" id="AE008923">
    <property type="protein sequence ID" value="AAM37243.1"/>
    <property type="molecule type" value="Genomic_DNA"/>
</dbReference>
<dbReference type="RefSeq" id="WP_003486043.1">
    <property type="nucleotide sequence ID" value="NC_003919.1"/>
</dbReference>
<dbReference type="SMR" id="Q8PJY6"/>
<dbReference type="KEGG" id="xac:XAC2391"/>
<dbReference type="eggNOG" id="COG0503">
    <property type="taxonomic scope" value="Bacteria"/>
</dbReference>
<dbReference type="HOGENOM" id="CLU_063339_3_0_6"/>
<dbReference type="UniPathway" id="UPA00588">
    <property type="reaction ID" value="UER00646"/>
</dbReference>
<dbReference type="Proteomes" id="UP000000576">
    <property type="component" value="Chromosome"/>
</dbReference>
<dbReference type="GO" id="GO:0005737">
    <property type="term" value="C:cytoplasm"/>
    <property type="evidence" value="ECO:0007669"/>
    <property type="project" value="UniProtKB-SubCell"/>
</dbReference>
<dbReference type="GO" id="GO:0002055">
    <property type="term" value="F:adenine binding"/>
    <property type="evidence" value="ECO:0007669"/>
    <property type="project" value="TreeGrafter"/>
</dbReference>
<dbReference type="GO" id="GO:0003999">
    <property type="term" value="F:adenine phosphoribosyltransferase activity"/>
    <property type="evidence" value="ECO:0007669"/>
    <property type="project" value="UniProtKB-UniRule"/>
</dbReference>
<dbReference type="GO" id="GO:0016208">
    <property type="term" value="F:AMP binding"/>
    <property type="evidence" value="ECO:0007669"/>
    <property type="project" value="TreeGrafter"/>
</dbReference>
<dbReference type="GO" id="GO:0006168">
    <property type="term" value="P:adenine salvage"/>
    <property type="evidence" value="ECO:0007669"/>
    <property type="project" value="InterPro"/>
</dbReference>
<dbReference type="GO" id="GO:0044209">
    <property type="term" value="P:AMP salvage"/>
    <property type="evidence" value="ECO:0007669"/>
    <property type="project" value="UniProtKB-UniRule"/>
</dbReference>
<dbReference type="GO" id="GO:0006166">
    <property type="term" value="P:purine ribonucleoside salvage"/>
    <property type="evidence" value="ECO:0007669"/>
    <property type="project" value="UniProtKB-KW"/>
</dbReference>
<dbReference type="CDD" id="cd06223">
    <property type="entry name" value="PRTases_typeI"/>
    <property type="match status" value="1"/>
</dbReference>
<dbReference type="FunFam" id="3.40.50.2020:FF:000021">
    <property type="entry name" value="Adenine phosphoribosyltransferase"/>
    <property type="match status" value="1"/>
</dbReference>
<dbReference type="Gene3D" id="3.40.50.2020">
    <property type="match status" value="1"/>
</dbReference>
<dbReference type="HAMAP" id="MF_00004">
    <property type="entry name" value="Aden_phosphoribosyltr"/>
    <property type="match status" value="1"/>
</dbReference>
<dbReference type="InterPro" id="IPR005764">
    <property type="entry name" value="Ade_phspho_trans"/>
</dbReference>
<dbReference type="InterPro" id="IPR000836">
    <property type="entry name" value="PRibTrfase_dom"/>
</dbReference>
<dbReference type="InterPro" id="IPR029057">
    <property type="entry name" value="PRTase-like"/>
</dbReference>
<dbReference type="InterPro" id="IPR050054">
    <property type="entry name" value="UPRTase/APRTase"/>
</dbReference>
<dbReference type="NCBIfam" id="TIGR01090">
    <property type="entry name" value="apt"/>
    <property type="match status" value="1"/>
</dbReference>
<dbReference type="NCBIfam" id="NF002634">
    <property type="entry name" value="PRK02304.1-3"/>
    <property type="match status" value="1"/>
</dbReference>
<dbReference type="NCBIfam" id="NF002636">
    <property type="entry name" value="PRK02304.1-5"/>
    <property type="match status" value="1"/>
</dbReference>
<dbReference type="PANTHER" id="PTHR32315">
    <property type="entry name" value="ADENINE PHOSPHORIBOSYLTRANSFERASE"/>
    <property type="match status" value="1"/>
</dbReference>
<dbReference type="PANTHER" id="PTHR32315:SF3">
    <property type="entry name" value="ADENINE PHOSPHORIBOSYLTRANSFERASE"/>
    <property type="match status" value="1"/>
</dbReference>
<dbReference type="Pfam" id="PF00156">
    <property type="entry name" value="Pribosyltran"/>
    <property type="match status" value="1"/>
</dbReference>
<dbReference type="SUPFAM" id="SSF53271">
    <property type="entry name" value="PRTase-like"/>
    <property type="match status" value="1"/>
</dbReference>
<dbReference type="PROSITE" id="PS00103">
    <property type="entry name" value="PUR_PYR_PR_TRANSFER"/>
    <property type="match status" value="1"/>
</dbReference>
<sequence length="186" mass="20098">MTDCSRCAGTNTSGPNHWPERIRDIVDFPKPGIVFKDITPLLSDGPDFASALDEMAQPWRTTPLDAVLGIEARGFILGAALARELRTGFVPVRKPGKLPGRTLIQEYALEYGTDRIEMHEDALPRGARVLIVDDVLATGGTLRAALGLAAQLELEVVGAAVLVELQGLQGRQKWANDVPLLATLSY</sequence>
<name>APT_XANAC</name>
<accession>Q8PJY6</accession>